<dbReference type="EC" id="3.1.1.29" evidence="1"/>
<dbReference type="EMBL" id="CP000116">
    <property type="protein sequence ID" value="AAZ96342.1"/>
    <property type="molecule type" value="Genomic_DNA"/>
</dbReference>
<dbReference type="RefSeq" id="WP_011310902.1">
    <property type="nucleotide sequence ID" value="NC_007404.1"/>
</dbReference>
<dbReference type="SMR" id="Q3SLR3"/>
<dbReference type="STRING" id="292415.Tbd_0389"/>
<dbReference type="KEGG" id="tbd:Tbd_0389"/>
<dbReference type="eggNOG" id="COG0193">
    <property type="taxonomic scope" value="Bacteria"/>
</dbReference>
<dbReference type="HOGENOM" id="CLU_062456_3_1_4"/>
<dbReference type="OrthoDB" id="9800507at2"/>
<dbReference type="Proteomes" id="UP000008291">
    <property type="component" value="Chromosome"/>
</dbReference>
<dbReference type="GO" id="GO:0005737">
    <property type="term" value="C:cytoplasm"/>
    <property type="evidence" value="ECO:0007669"/>
    <property type="project" value="UniProtKB-SubCell"/>
</dbReference>
<dbReference type="GO" id="GO:0004045">
    <property type="term" value="F:peptidyl-tRNA hydrolase activity"/>
    <property type="evidence" value="ECO:0007669"/>
    <property type="project" value="UniProtKB-UniRule"/>
</dbReference>
<dbReference type="GO" id="GO:0000049">
    <property type="term" value="F:tRNA binding"/>
    <property type="evidence" value="ECO:0007669"/>
    <property type="project" value="UniProtKB-UniRule"/>
</dbReference>
<dbReference type="GO" id="GO:0006515">
    <property type="term" value="P:protein quality control for misfolded or incompletely synthesized proteins"/>
    <property type="evidence" value="ECO:0007669"/>
    <property type="project" value="UniProtKB-UniRule"/>
</dbReference>
<dbReference type="GO" id="GO:0072344">
    <property type="term" value="P:rescue of stalled ribosome"/>
    <property type="evidence" value="ECO:0007669"/>
    <property type="project" value="UniProtKB-UniRule"/>
</dbReference>
<dbReference type="CDD" id="cd00462">
    <property type="entry name" value="PTH"/>
    <property type="match status" value="1"/>
</dbReference>
<dbReference type="FunFam" id="3.40.50.1470:FF:000001">
    <property type="entry name" value="Peptidyl-tRNA hydrolase"/>
    <property type="match status" value="1"/>
</dbReference>
<dbReference type="Gene3D" id="3.40.50.1470">
    <property type="entry name" value="Peptidyl-tRNA hydrolase"/>
    <property type="match status" value="1"/>
</dbReference>
<dbReference type="HAMAP" id="MF_00083">
    <property type="entry name" value="Pept_tRNA_hydro_bact"/>
    <property type="match status" value="1"/>
</dbReference>
<dbReference type="InterPro" id="IPR001328">
    <property type="entry name" value="Pept_tRNA_hydro"/>
</dbReference>
<dbReference type="InterPro" id="IPR018171">
    <property type="entry name" value="Pept_tRNA_hydro_CS"/>
</dbReference>
<dbReference type="InterPro" id="IPR036416">
    <property type="entry name" value="Pept_tRNA_hydro_sf"/>
</dbReference>
<dbReference type="NCBIfam" id="TIGR00447">
    <property type="entry name" value="pth"/>
    <property type="match status" value="1"/>
</dbReference>
<dbReference type="PANTHER" id="PTHR17224">
    <property type="entry name" value="PEPTIDYL-TRNA HYDROLASE"/>
    <property type="match status" value="1"/>
</dbReference>
<dbReference type="PANTHER" id="PTHR17224:SF1">
    <property type="entry name" value="PEPTIDYL-TRNA HYDROLASE"/>
    <property type="match status" value="1"/>
</dbReference>
<dbReference type="Pfam" id="PF01195">
    <property type="entry name" value="Pept_tRNA_hydro"/>
    <property type="match status" value="1"/>
</dbReference>
<dbReference type="SUPFAM" id="SSF53178">
    <property type="entry name" value="Peptidyl-tRNA hydrolase-like"/>
    <property type="match status" value="1"/>
</dbReference>
<dbReference type="PROSITE" id="PS01196">
    <property type="entry name" value="PEPT_TRNA_HYDROL_2"/>
    <property type="match status" value="1"/>
</dbReference>
<name>PTH_THIDA</name>
<comment type="function">
    <text evidence="1">Hydrolyzes ribosome-free peptidyl-tRNAs (with 1 or more amino acids incorporated), which drop off the ribosome during protein synthesis, or as a result of ribosome stalling.</text>
</comment>
<comment type="function">
    <text evidence="1">Catalyzes the release of premature peptidyl moieties from peptidyl-tRNA molecules trapped in stalled 50S ribosomal subunits, and thus maintains levels of free tRNAs and 50S ribosomes.</text>
</comment>
<comment type="catalytic activity">
    <reaction evidence="1">
        <text>an N-acyl-L-alpha-aminoacyl-tRNA + H2O = an N-acyl-L-amino acid + a tRNA + H(+)</text>
        <dbReference type="Rhea" id="RHEA:54448"/>
        <dbReference type="Rhea" id="RHEA-COMP:10123"/>
        <dbReference type="Rhea" id="RHEA-COMP:13883"/>
        <dbReference type="ChEBI" id="CHEBI:15377"/>
        <dbReference type="ChEBI" id="CHEBI:15378"/>
        <dbReference type="ChEBI" id="CHEBI:59874"/>
        <dbReference type="ChEBI" id="CHEBI:78442"/>
        <dbReference type="ChEBI" id="CHEBI:138191"/>
        <dbReference type="EC" id="3.1.1.29"/>
    </reaction>
</comment>
<comment type="subunit">
    <text evidence="1">Monomer.</text>
</comment>
<comment type="subcellular location">
    <subcellularLocation>
        <location evidence="1">Cytoplasm</location>
    </subcellularLocation>
</comment>
<comment type="similarity">
    <text evidence="1">Belongs to the PTH family.</text>
</comment>
<reference key="1">
    <citation type="journal article" date="2006" name="J. Bacteriol.">
        <title>The genome sequence of the obligately chemolithoautotrophic, facultatively anaerobic bacterium Thiobacillus denitrificans.</title>
        <authorList>
            <person name="Beller H.R."/>
            <person name="Chain P.S."/>
            <person name="Letain T.E."/>
            <person name="Chakicherla A."/>
            <person name="Larimer F.W."/>
            <person name="Richardson P.M."/>
            <person name="Coleman M.A."/>
            <person name="Wood A.P."/>
            <person name="Kelly D.P."/>
        </authorList>
    </citation>
    <scope>NUCLEOTIDE SEQUENCE [LARGE SCALE GENOMIC DNA]</scope>
    <source>
        <strain>ATCC 25259 / T1</strain>
    </source>
</reference>
<protein>
    <recommendedName>
        <fullName evidence="1">Peptidyl-tRNA hydrolase</fullName>
        <shortName evidence="1">Pth</shortName>
        <ecNumber evidence="1">3.1.1.29</ecNumber>
    </recommendedName>
</protein>
<evidence type="ECO:0000255" key="1">
    <source>
        <dbReference type="HAMAP-Rule" id="MF_00083"/>
    </source>
</evidence>
<organism>
    <name type="scientific">Thiobacillus denitrificans (strain ATCC 25259 / T1)</name>
    <dbReference type="NCBI Taxonomy" id="292415"/>
    <lineage>
        <taxon>Bacteria</taxon>
        <taxon>Pseudomonadati</taxon>
        <taxon>Pseudomonadota</taxon>
        <taxon>Betaproteobacteria</taxon>
        <taxon>Nitrosomonadales</taxon>
        <taxon>Thiobacillaceae</taxon>
        <taxon>Thiobacillus</taxon>
    </lineage>
</organism>
<sequence length="202" mass="22181">MTAPSLAPPRLIVGLGNPGRDYEETRHNAGFWFCARLAQAWGAALAHESRFHGIVGRHGTRWMLLPQTFMNRSGQAVGALARFHRIAPAEILVVHDELDIPPGQLRLKFGGGMGGHNGLKDITAHLGTQDYWRLRIGIGHPGDRSEVVNYVLKPPRREEQADIDAAIERALGLLPLIEKGEWNAATQRANSKPASPKSQETP</sequence>
<feature type="chain" id="PRO_0000264132" description="Peptidyl-tRNA hydrolase">
    <location>
        <begin position="1"/>
        <end position="202"/>
    </location>
</feature>
<feature type="active site" description="Proton acceptor" evidence="1">
    <location>
        <position position="27"/>
    </location>
</feature>
<feature type="binding site" evidence="1">
    <location>
        <position position="22"/>
    </location>
    <ligand>
        <name>tRNA</name>
        <dbReference type="ChEBI" id="CHEBI:17843"/>
    </ligand>
</feature>
<feature type="binding site" evidence="1">
    <location>
        <position position="69"/>
    </location>
    <ligand>
        <name>tRNA</name>
        <dbReference type="ChEBI" id="CHEBI:17843"/>
    </ligand>
</feature>
<feature type="binding site" evidence="1">
    <location>
        <position position="71"/>
    </location>
    <ligand>
        <name>tRNA</name>
        <dbReference type="ChEBI" id="CHEBI:17843"/>
    </ligand>
</feature>
<feature type="binding site" evidence="1">
    <location>
        <position position="117"/>
    </location>
    <ligand>
        <name>tRNA</name>
        <dbReference type="ChEBI" id="CHEBI:17843"/>
    </ligand>
</feature>
<feature type="site" description="Discriminates between blocked and unblocked aminoacyl-tRNA" evidence="1">
    <location>
        <position position="17"/>
    </location>
</feature>
<feature type="site" description="Stabilizes the basic form of H active site to accept a proton" evidence="1">
    <location>
        <position position="96"/>
    </location>
</feature>
<accession>Q3SLR3</accession>
<keyword id="KW-0963">Cytoplasm</keyword>
<keyword id="KW-0378">Hydrolase</keyword>
<keyword id="KW-1185">Reference proteome</keyword>
<keyword id="KW-0694">RNA-binding</keyword>
<keyword id="KW-0820">tRNA-binding</keyword>
<gene>
    <name evidence="1" type="primary">pth</name>
    <name type="ordered locus">Tbd_0389</name>
</gene>
<proteinExistence type="inferred from homology"/>